<accession>B7LGJ3</accession>
<protein>
    <recommendedName>
        <fullName evidence="1">Aspartate 1-decarboxylase</fullName>
        <ecNumber evidence="1">4.1.1.11</ecNumber>
    </recommendedName>
    <alternativeName>
        <fullName evidence="1">Aspartate alpha-decarboxylase</fullName>
    </alternativeName>
    <component>
        <recommendedName>
            <fullName evidence="1">Aspartate 1-decarboxylase beta chain</fullName>
        </recommendedName>
    </component>
    <component>
        <recommendedName>
            <fullName evidence="1">Aspartate 1-decarboxylase alpha chain</fullName>
        </recommendedName>
    </component>
</protein>
<reference key="1">
    <citation type="journal article" date="2009" name="PLoS Genet.">
        <title>Organised genome dynamics in the Escherichia coli species results in highly diverse adaptive paths.</title>
        <authorList>
            <person name="Touchon M."/>
            <person name="Hoede C."/>
            <person name="Tenaillon O."/>
            <person name="Barbe V."/>
            <person name="Baeriswyl S."/>
            <person name="Bidet P."/>
            <person name="Bingen E."/>
            <person name="Bonacorsi S."/>
            <person name="Bouchier C."/>
            <person name="Bouvet O."/>
            <person name="Calteau A."/>
            <person name="Chiapello H."/>
            <person name="Clermont O."/>
            <person name="Cruveiller S."/>
            <person name="Danchin A."/>
            <person name="Diard M."/>
            <person name="Dossat C."/>
            <person name="Karoui M.E."/>
            <person name="Frapy E."/>
            <person name="Garry L."/>
            <person name="Ghigo J.M."/>
            <person name="Gilles A.M."/>
            <person name="Johnson J."/>
            <person name="Le Bouguenec C."/>
            <person name="Lescat M."/>
            <person name="Mangenot S."/>
            <person name="Martinez-Jehanne V."/>
            <person name="Matic I."/>
            <person name="Nassif X."/>
            <person name="Oztas S."/>
            <person name="Petit M.A."/>
            <person name="Pichon C."/>
            <person name="Rouy Z."/>
            <person name="Ruf C.S."/>
            <person name="Schneider D."/>
            <person name="Tourret J."/>
            <person name="Vacherie B."/>
            <person name="Vallenet D."/>
            <person name="Medigue C."/>
            <person name="Rocha E.P.C."/>
            <person name="Denamur E."/>
        </authorList>
    </citation>
    <scope>NUCLEOTIDE SEQUENCE [LARGE SCALE GENOMIC DNA]</scope>
    <source>
        <strain>55989 / EAEC</strain>
    </source>
</reference>
<name>PAND_ECO55</name>
<feature type="chain" id="PRO_1000191986" description="Aspartate 1-decarboxylase beta chain" evidence="1">
    <location>
        <begin position="1"/>
        <end position="24"/>
    </location>
</feature>
<feature type="chain" id="PRO_1000191987" description="Aspartate 1-decarboxylase alpha chain" evidence="1">
    <location>
        <begin position="25"/>
        <end position="126"/>
    </location>
</feature>
<feature type="active site" description="Schiff-base intermediate with substrate; via pyruvic acid" evidence="1">
    <location>
        <position position="25"/>
    </location>
</feature>
<feature type="active site" description="Proton donor" evidence="1">
    <location>
        <position position="58"/>
    </location>
</feature>
<feature type="binding site" evidence="1">
    <location>
        <position position="57"/>
    </location>
    <ligand>
        <name>substrate</name>
    </ligand>
</feature>
<feature type="binding site" evidence="1">
    <location>
        <begin position="73"/>
        <end position="75"/>
    </location>
    <ligand>
        <name>substrate</name>
    </ligand>
</feature>
<feature type="modified residue" description="Pyruvic acid (Ser)" evidence="1">
    <location>
        <position position="25"/>
    </location>
</feature>
<comment type="function">
    <text evidence="1">Catalyzes the pyruvoyl-dependent decarboxylation of aspartate to produce beta-alanine.</text>
</comment>
<comment type="catalytic activity">
    <reaction evidence="1">
        <text>L-aspartate + H(+) = beta-alanine + CO2</text>
        <dbReference type="Rhea" id="RHEA:19497"/>
        <dbReference type="ChEBI" id="CHEBI:15378"/>
        <dbReference type="ChEBI" id="CHEBI:16526"/>
        <dbReference type="ChEBI" id="CHEBI:29991"/>
        <dbReference type="ChEBI" id="CHEBI:57966"/>
        <dbReference type="EC" id="4.1.1.11"/>
    </reaction>
</comment>
<comment type="cofactor">
    <cofactor evidence="1">
        <name>pyruvate</name>
        <dbReference type="ChEBI" id="CHEBI:15361"/>
    </cofactor>
    <text evidence="1">Binds 1 pyruvoyl group covalently per subunit.</text>
</comment>
<comment type="pathway">
    <text evidence="1">Cofactor biosynthesis; (R)-pantothenate biosynthesis; beta-alanine from L-aspartate: step 1/1.</text>
</comment>
<comment type="subunit">
    <text evidence="1">Heterooctamer of four alpha and four beta subunits.</text>
</comment>
<comment type="subcellular location">
    <subcellularLocation>
        <location evidence="1">Cytoplasm</location>
    </subcellularLocation>
</comment>
<comment type="PTM">
    <text evidence="1">Is synthesized initially as an inactive proenzyme, which is activated by self-cleavage at a specific serine bond to produce a beta-subunit with a hydroxyl group at its C-terminus and an alpha-subunit with a pyruvoyl group at its N-terminus.</text>
</comment>
<comment type="similarity">
    <text evidence="1">Belongs to the PanD family.</text>
</comment>
<organism>
    <name type="scientific">Escherichia coli (strain 55989 / EAEC)</name>
    <dbReference type="NCBI Taxonomy" id="585055"/>
    <lineage>
        <taxon>Bacteria</taxon>
        <taxon>Pseudomonadati</taxon>
        <taxon>Pseudomonadota</taxon>
        <taxon>Gammaproteobacteria</taxon>
        <taxon>Enterobacterales</taxon>
        <taxon>Enterobacteriaceae</taxon>
        <taxon>Escherichia</taxon>
    </lineage>
</organism>
<proteinExistence type="inferred from homology"/>
<evidence type="ECO:0000255" key="1">
    <source>
        <dbReference type="HAMAP-Rule" id="MF_00446"/>
    </source>
</evidence>
<gene>
    <name evidence="1" type="primary">panD</name>
    <name type="ordered locus">EC55989_0125</name>
</gene>
<sequence>MIRTMLQGKLHRVKVTHADLHYEGSCAIDQDFLDAAGILENEAIDIWNVTNGKRFSTYAIAAERGSRIISVNGAAAHCASVGDIVIIASFVTMPDEEARTWRPNVAYFEGDNEMKRTAKAIPVQVA</sequence>
<keyword id="KW-0068">Autocatalytic cleavage</keyword>
<keyword id="KW-0963">Cytoplasm</keyword>
<keyword id="KW-0210">Decarboxylase</keyword>
<keyword id="KW-0456">Lyase</keyword>
<keyword id="KW-0566">Pantothenate biosynthesis</keyword>
<keyword id="KW-0670">Pyruvate</keyword>
<keyword id="KW-1185">Reference proteome</keyword>
<keyword id="KW-0704">Schiff base</keyword>
<keyword id="KW-0865">Zymogen</keyword>
<dbReference type="EC" id="4.1.1.11" evidence="1"/>
<dbReference type="EMBL" id="CU928145">
    <property type="protein sequence ID" value="CAU96012.1"/>
    <property type="molecule type" value="Genomic_DNA"/>
</dbReference>
<dbReference type="RefSeq" id="WP_000621515.1">
    <property type="nucleotide sequence ID" value="NZ_CP028304.1"/>
</dbReference>
<dbReference type="SMR" id="B7LGJ3"/>
<dbReference type="GeneID" id="93777305"/>
<dbReference type="KEGG" id="eck:EC55989_0125"/>
<dbReference type="HOGENOM" id="CLU_115305_2_1_6"/>
<dbReference type="UniPathway" id="UPA00028">
    <property type="reaction ID" value="UER00002"/>
</dbReference>
<dbReference type="Proteomes" id="UP000000746">
    <property type="component" value="Chromosome"/>
</dbReference>
<dbReference type="GO" id="GO:0005829">
    <property type="term" value="C:cytosol"/>
    <property type="evidence" value="ECO:0007669"/>
    <property type="project" value="TreeGrafter"/>
</dbReference>
<dbReference type="GO" id="GO:0004068">
    <property type="term" value="F:aspartate 1-decarboxylase activity"/>
    <property type="evidence" value="ECO:0007669"/>
    <property type="project" value="UniProtKB-UniRule"/>
</dbReference>
<dbReference type="GO" id="GO:0006523">
    <property type="term" value="P:alanine biosynthetic process"/>
    <property type="evidence" value="ECO:0007669"/>
    <property type="project" value="InterPro"/>
</dbReference>
<dbReference type="GO" id="GO:0015940">
    <property type="term" value="P:pantothenate biosynthetic process"/>
    <property type="evidence" value="ECO:0007669"/>
    <property type="project" value="UniProtKB-UniRule"/>
</dbReference>
<dbReference type="CDD" id="cd06919">
    <property type="entry name" value="Asp_decarbox"/>
    <property type="match status" value="1"/>
</dbReference>
<dbReference type="FunFam" id="2.40.40.20:FF:000004">
    <property type="entry name" value="Aspartate 1-decarboxylase"/>
    <property type="match status" value="1"/>
</dbReference>
<dbReference type="Gene3D" id="2.40.40.20">
    <property type="match status" value="1"/>
</dbReference>
<dbReference type="HAMAP" id="MF_00446">
    <property type="entry name" value="PanD"/>
    <property type="match status" value="1"/>
</dbReference>
<dbReference type="InterPro" id="IPR009010">
    <property type="entry name" value="Asp_de-COase-like_dom_sf"/>
</dbReference>
<dbReference type="InterPro" id="IPR003190">
    <property type="entry name" value="Asp_decarbox"/>
</dbReference>
<dbReference type="NCBIfam" id="TIGR00223">
    <property type="entry name" value="panD"/>
    <property type="match status" value="1"/>
</dbReference>
<dbReference type="PANTHER" id="PTHR21012">
    <property type="entry name" value="ASPARTATE 1-DECARBOXYLASE"/>
    <property type="match status" value="1"/>
</dbReference>
<dbReference type="PANTHER" id="PTHR21012:SF0">
    <property type="entry name" value="ASPARTATE 1-DECARBOXYLASE"/>
    <property type="match status" value="1"/>
</dbReference>
<dbReference type="Pfam" id="PF02261">
    <property type="entry name" value="Asp_decarbox"/>
    <property type="match status" value="1"/>
</dbReference>
<dbReference type="PIRSF" id="PIRSF006246">
    <property type="entry name" value="Asp_decarbox"/>
    <property type="match status" value="1"/>
</dbReference>
<dbReference type="SUPFAM" id="SSF50692">
    <property type="entry name" value="ADC-like"/>
    <property type="match status" value="1"/>
</dbReference>